<keyword id="KW-0028">Amino-acid biosynthesis</keyword>
<keyword id="KW-0963">Cytoplasm</keyword>
<keyword id="KW-0315">Glutamine amidotransferase</keyword>
<keyword id="KW-0368">Histidine biosynthesis</keyword>
<keyword id="KW-0378">Hydrolase</keyword>
<keyword id="KW-0456">Lyase</keyword>
<keyword id="KW-1185">Reference proteome</keyword>
<sequence length="224" mass="23971">MSNPDTIIIDTGCANLSSVRYAFERIGADVEVSDDIDKIKAATRVVLPGVGTARAAMKALKDKKLIDTICSLTQPVLGVCLGMQMLTKASQERGGLSYGNSSKDCQCLGLIDTNIEQLDAKGLPLPHMGWNQISPSEHPLFAGVAEGSYVYFVHSYRAPLGDFTIAKCEYGEGFSAAIAKDNFMGVQFHPEKSAAVGATILRNFMKMNAGSFAGNHKSTQESAQ</sequence>
<comment type="function">
    <text evidence="1">IGPS catalyzes the conversion of PRFAR and glutamine to IGP, AICAR and glutamate. The HisH subunit catalyzes the hydrolysis of glutamine to glutamate and ammonia as part of the synthesis of IGP and AICAR. The resulting ammonia molecule is channeled to the active site of HisF.</text>
</comment>
<comment type="catalytic activity">
    <reaction evidence="1">
        <text>5-[(5-phospho-1-deoxy-D-ribulos-1-ylimino)methylamino]-1-(5-phospho-beta-D-ribosyl)imidazole-4-carboxamide + L-glutamine = D-erythro-1-(imidazol-4-yl)glycerol 3-phosphate + 5-amino-1-(5-phospho-beta-D-ribosyl)imidazole-4-carboxamide + L-glutamate + H(+)</text>
        <dbReference type="Rhea" id="RHEA:24793"/>
        <dbReference type="ChEBI" id="CHEBI:15378"/>
        <dbReference type="ChEBI" id="CHEBI:29985"/>
        <dbReference type="ChEBI" id="CHEBI:58278"/>
        <dbReference type="ChEBI" id="CHEBI:58359"/>
        <dbReference type="ChEBI" id="CHEBI:58475"/>
        <dbReference type="ChEBI" id="CHEBI:58525"/>
        <dbReference type="EC" id="4.3.2.10"/>
    </reaction>
</comment>
<comment type="catalytic activity">
    <reaction evidence="1">
        <text>L-glutamine + H2O = L-glutamate + NH4(+)</text>
        <dbReference type="Rhea" id="RHEA:15889"/>
        <dbReference type="ChEBI" id="CHEBI:15377"/>
        <dbReference type="ChEBI" id="CHEBI:28938"/>
        <dbReference type="ChEBI" id="CHEBI:29985"/>
        <dbReference type="ChEBI" id="CHEBI:58359"/>
        <dbReference type="EC" id="3.5.1.2"/>
    </reaction>
</comment>
<comment type="pathway">
    <text evidence="1">Amino-acid biosynthesis; L-histidine biosynthesis; L-histidine from 5-phospho-alpha-D-ribose 1-diphosphate: step 5/9.</text>
</comment>
<comment type="subunit">
    <text evidence="1">Heterodimer of HisH and HisF.</text>
</comment>
<comment type="subcellular location">
    <subcellularLocation>
        <location evidence="1">Cytoplasm</location>
    </subcellularLocation>
</comment>
<proteinExistence type="inferred from homology"/>
<name>HIS5_SHELP</name>
<reference key="1">
    <citation type="submission" date="2007-03" db="EMBL/GenBank/DDBJ databases">
        <title>Complete sequence of Shewanella loihica PV-4.</title>
        <authorList>
            <consortium name="US DOE Joint Genome Institute"/>
            <person name="Copeland A."/>
            <person name="Lucas S."/>
            <person name="Lapidus A."/>
            <person name="Barry K."/>
            <person name="Detter J.C."/>
            <person name="Glavina del Rio T."/>
            <person name="Hammon N."/>
            <person name="Israni S."/>
            <person name="Dalin E."/>
            <person name="Tice H."/>
            <person name="Pitluck S."/>
            <person name="Chain P."/>
            <person name="Malfatti S."/>
            <person name="Shin M."/>
            <person name="Vergez L."/>
            <person name="Schmutz J."/>
            <person name="Larimer F."/>
            <person name="Land M."/>
            <person name="Hauser L."/>
            <person name="Kyrpides N."/>
            <person name="Mikhailova N."/>
            <person name="Romine M.F."/>
            <person name="Serres G."/>
            <person name="Fredrickson J."/>
            <person name="Tiedje J."/>
            <person name="Richardson P."/>
        </authorList>
    </citation>
    <scope>NUCLEOTIDE SEQUENCE [LARGE SCALE GENOMIC DNA]</scope>
    <source>
        <strain>ATCC BAA-1088 / PV-4</strain>
    </source>
</reference>
<gene>
    <name evidence="1" type="primary">hisH</name>
    <name type="ordered locus">Shew_2201</name>
</gene>
<feature type="chain" id="PRO_1000114790" description="Imidazole glycerol phosphate synthase subunit HisH">
    <location>
        <begin position="1"/>
        <end position="224"/>
    </location>
</feature>
<feature type="domain" description="Glutamine amidotransferase type-1" evidence="1">
    <location>
        <begin position="5"/>
        <end position="214"/>
    </location>
</feature>
<feature type="active site" description="Nucleophile" evidence="1">
    <location>
        <position position="80"/>
    </location>
</feature>
<feature type="active site" evidence="1">
    <location>
        <position position="189"/>
    </location>
</feature>
<feature type="active site" evidence="1">
    <location>
        <position position="191"/>
    </location>
</feature>
<accession>A3QF19</accession>
<protein>
    <recommendedName>
        <fullName evidence="1">Imidazole glycerol phosphate synthase subunit HisH</fullName>
        <ecNumber evidence="1">4.3.2.10</ecNumber>
    </recommendedName>
    <alternativeName>
        <fullName evidence="1">IGP synthase glutaminase subunit</fullName>
        <ecNumber evidence="1">3.5.1.2</ecNumber>
    </alternativeName>
    <alternativeName>
        <fullName evidence="1">IGP synthase subunit HisH</fullName>
    </alternativeName>
    <alternativeName>
        <fullName evidence="1">ImGP synthase subunit HisH</fullName>
        <shortName evidence="1">IGPS subunit HisH</shortName>
    </alternativeName>
</protein>
<organism>
    <name type="scientific">Shewanella loihica (strain ATCC BAA-1088 / PV-4)</name>
    <dbReference type="NCBI Taxonomy" id="323850"/>
    <lineage>
        <taxon>Bacteria</taxon>
        <taxon>Pseudomonadati</taxon>
        <taxon>Pseudomonadota</taxon>
        <taxon>Gammaproteobacteria</taxon>
        <taxon>Alteromonadales</taxon>
        <taxon>Shewanellaceae</taxon>
        <taxon>Shewanella</taxon>
    </lineage>
</organism>
<evidence type="ECO:0000255" key="1">
    <source>
        <dbReference type="HAMAP-Rule" id="MF_00278"/>
    </source>
</evidence>
<dbReference type="EC" id="4.3.2.10" evidence="1"/>
<dbReference type="EC" id="3.5.1.2" evidence="1"/>
<dbReference type="EMBL" id="CP000606">
    <property type="protein sequence ID" value="ABO24067.1"/>
    <property type="molecule type" value="Genomic_DNA"/>
</dbReference>
<dbReference type="RefSeq" id="WP_011865999.1">
    <property type="nucleotide sequence ID" value="NC_009092.1"/>
</dbReference>
<dbReference type="SMR" id="A3QF19"/>
<dbReference type="STRING" id="323850.Shew_2201"/>
<dbReference type="MEROPS" id="C26.965"/>
<dbReference type="KEGG" id="slo:Shew_2201"/>
<dbReference type="eggNOG" id="COG0118">
    <property type="taxonomic scope" value="Bacteria"/>
</dbReference>
<dbReference type="HOGENOM" id="CLU_071837_0_0_6"/>
<dbReference type="OrthoDB" id="9807137at2"/>
<dbReference type="UniPathway" id="UPA00031">
    <property type="reaction ID" value="UER00010"/>
</dbReference>
<dbReference type="Proteomes" id="UP000001558">
    <property type="component" value="Chromosome"/>
</dbReference>
<dbReference type="GO" id="GO:0005737">
    <property type="term" value="C:cytoplasm"/>
    <property type="evidence" value="ECO:0007669"/>
    <property type="project" value="UniProtKB-SubCell"/>
</dbReference>
<dbReference type="GO" id="GO:0004359">
    <property type="term" value="F:glutaminase activity"/>
    <property type="evidence" value="ECO:0007669"/>
    <property type="project" value="UniProtKB-EC"/>
</dbReference>
<dbReference type="GO" id="GO:0000107">
    <property type="term" value="F:imidazoleglycerol-phosphate synthase activity"/>
    <property type="evidence" value="ECO:0007669"/>
    <property type="project" value="UniProtKB-UniRule"/>
</dbReference>
<dbReference type="GO" id="GO:0016829">
    <property type="term" value="F:lyase activity"/>
    <property type="evidence" value="ECO:0007669"/>
    <property type="project" value="UniProtKB-KW"/>
</dbReference>
<dbReference type="GO" id="GO:0000105">
    <property type="term" value="P:L-histidine biosynthetic process"/>
    <property type="evidence" value="ECO:0007669"/>
    <property type="project" value="UniProtKB-UniRule"/>
</dbReference>
<dbReference type="CDD" id="cd01748">
    <property type="entry name" value="GATase1_IGP_Synthase"/>
    <property type="match status" value="1"/>
</dbReference>
<dbReference type="FunFam" id="3.40.50.880:FF:000009">
    <property type="entry name" value="Imidazole glycerol phosphate synthase subunit HisH"/>
    <property type="match status" value="1"/>
</dbReference>
<dbReference type="Gene3D" id="3.40.50.880">
    <property type="match status" value="1"/>
</dbReference>
<dbReference type="HAMAP" id="MF_00278">
    <property type="entry name" value="HisH"/>
    <property type="match status" value="1"/>
</dbReference>
<dbReference type="InterPro" id="IPR029062">
    <property type="entry name" value="Class_I_gatase-like"/>
</dbReference>
<dbReference type="InterPro" id="IPR017926">
    <property type="entry name" value="GATASE"/>
</dbReference>
<dbReference type="InterPro" id="IPR010139">
    <property type="entry name" value="Imidazole-glycPsynth_HisH"/>
</dbReference>
<dbReference type="NCBIfam" id="TIGR01855">
    <property type="entry name" value="IMP_synth_hisH"/>
    <property type="match status" value="1"/>
</dbReference>
<dbReference type="PANTHER" id="PTHR42701">
    <property type="entry name" value="IMIDAZOLE GLYCEROL PHOSPHATE SYNTHASE SUBUNIT HISH"/>
    <property type="match status" value="1"/>
</dbReference>
<dbReference type="PANTHER" id="PTHR42701:SF1">
    <property type="entry name" value="IMIDAZOLE GLYCEROL PHOSPHATE SYNTHASE SUBUNIT HISH"/>
    <property type="match status" value="1"/>
</dbReference>
<dbReference type="Pfam" id="PF00117">
    <property type="entry name" value="GATase"/>
    <property type="match status" value="1"/>
</dbReference>
<dbReference type="PIRSF" id="PIRSF000495">
    <property type="entry name" value="Amidotransf_hisH"/>
    <property type="match status" value="1"/>
</dbReference>
<dbReference type="PRINTS" id="PR00096">
    <property type="entry name" value="GATASE"/>
</dbReference>
<dbReference type="SUPFAM" id="SSF52317">
    <property type="entry name" value="Class I glutamine amidotransferase-like"/>
    <property type="match status" value="1"/>
</dbReference>
<dbReference type="PROSITE" id="PS51273">
    <property type="entry name" value="GATASE_TYPE_1"/>
    <property type="match status" value="1"/>
</dbReference>